<accession>Q2N6F2</accession>
<protein>
    <recommendedName>
        <fullName evidence="1">Ribosomal RNA large subunit methyltransferase H</fullName>
        <ecNumber evidence="1">2.1.1.177</ecNumber>
    </recommendedName>
    <alternativeName>
        <fullName evidence="1">23S rRNA (pseudouridine1915-N3)-methyltransferase</fullName>
    </alternativeName>
    <alternativeName>
        <fullName evidence="1">23S rRNA m3Psi1915 methyltransferase</fullName>
    </alternativeName>
    <alternativeName>
        <fullName evidence="1">rRNA (pseudouridine-N3-)-methyltransferase RlmH</fullName>
    </alternativeName>
</protein>
<evidence type="ECO:0000255" key="1">
    <source>
        <dbReference type="HAMAP-Rule" id="MF_00658"/>
    </source>
</evidence>
<sequence length="140" mass="15976">MLLHIIARGKIARSPEEELVTRYEKRLTWPVKLTELPETGGRIPDPQTPFKTVLLDERGKDLSSHRLARQLERWRDDGMRETRFVLGAADGHAQEERAEADLLLAFGSATWPHLLARAMLMEQLYRATSILAGHPYHRAG</sequence>
<name>RLMH_ERYLH</name>
<reference key="1">
    <citation type="journal article" date="2009" name="J. Bacteriol.">
        <title>Complete genome sequence of Erythrobacter litoralis HTCC2594.</title>
        <authorList>
            <person name="Oh H.M."/>
            <person name="Giovannoni S.J."/>
            <person name="Ferriera S."/>
            <person name="Johnson J."/>
            <person name="Cho J.C."/>
        </authorList>
    </citation>
    <scope>NUCLEOTIDE SEQUENCE [LARGE SCALE GENOMIC DNA]</scope>
    <source>
        <strain>HTCC2594</strain>
    </source>
</reference>
<proteinExistence type="inferred from homology"/>
<dbReference type="EC" id="2.1.1.177" evidence="1"/>
<dbReference type="EMBL" id="CP000157">
    <property type="protein sequence ID" value="ABC64739.1"/>
    <property type="molecule type" value="Genomic_DNA"/>
</dbReference>
<dbReference type="RefSeq" id="WP_011415561.1">
    <property type="nucleotide sequence ID" value="NC_007722.1"/>
</dbReference>
<dbReference type="SMR" id="Q2N6F2"/>
<dbReference type="STRING" id="314225.ELI_13235"/>
<dbReference type="KEGG" id="eli:ELI_13235"/>
<dbReference type="eggNOG" id="COG1576">
    <property type="taxonomic scope" value="Bacteria"/>
</dbReference>
<dbReference type="HOGENOM" id="CLU_100552_1_1_5"/>
<dbReference type="OrthoDB" id="9806643at2"/>
<dbReference type="Proteomes" id="UP000008808">
    <property type="component" value="Chromosome"/>
</dbReference>
<dbReference type="GO" id="GO:0005737">
    <property type="term" value="C:cytoplasm"/>
    <property type="evidence" value="ECO:0007669"/>
    <property type="project" value="UniProtKB-SubCell"/>
</dbReference>
<dbReference type="GO" id="GO:0070038">
    <property type="term" value="F:rRNA (pseudouridine-N3-)-methyltransferase activity"/>
    <property type="evidence" value="ECO:0007669"/>
    <property type="project" value="UniProtKB-UniRule"/>
</dbReference>
<dbReference type="CDD" id="cd18081">
    <property type="entry name" value="RlmH-like"/>
    <property type="match status" value="1"/>
</dbReference>
<dbReference type="Gene3D" id="3.40.1280.10">
    <property type="match status" value="1"/>
</dbReference>
<dbReference type="HAMAP" id="MF_00658">
    <property type="entry name" value="23SrRNA_methyltr_H"/>
    <property type="match status" value="1"/>
</dbReference>
<dbReference type="InterPro" id="IPR029028">
    <property type="entry name" value="Alpha/beta_knot_MTases"/>
</dbReference>
<dbReference type="InterPro" id="IPR003742">
    <property type="entry name" value="RlmH-like"/>
</dbReference>
<dbReference type="InterPro" id="IPR029026">
    <property type="entry name" value="tRNA_m1G_MTases_N"/>
</dbReference>
<dbReference type="PANTHER" id="PTHR33603">
    <property type="entry name" value="METHYLTRANSFERASE"/>
    <property type="match status" value="1"/>
</dbReference>
<dbReference type="PANTHER" id="PTHR33603:SF1">
    <property type="entry name" value="RIBOSOMAL RNA LARGE SUBUNIT METHYLTRANSFERASE H"/>
    <property type="match status" value="1"/>
</dbReference>
<dbReference type="Pfam" id="PF02590">
    <property type="entry name" value="SPOUT_MTase"/>
    <property type="match status" value="1"/>
</dbReference>
<dbReference type="SUPFAM" id="SSF75217">
    <property type="entry name" value="alpha/beta knot"/>
    <property type="match status" value="1"/>
</dbReference>
<gene>
    <name evidence="1" type="primary">rlmH</name>
    <name type="ordered locus">ELI_13235</name>
</gene>
<organism>
    <name type="scientific">Erythrobacter litoralis (strain HTCC2594)</name>
    <dbReference type="NCBI Taxonomy" id="314225"/>
    <lineage>
        <taxon>Bacteria</taxon>
        <taxon>Pseudomonadati</taxon>
        <taxon>Pseudomonadota</taxon>
        <taxon>Alphaproteobacteria</taxon>
        <taxon>Sphingomonadales</taxon>
        <taxon>Erythrobacteraceae</taxon>
        <taxon>Erythrobacter/Porphyrobacter group</taxon>
        <taxon>Erythrobacter</taxon>
    </lineage>
</organism>
<feature type="chain" id="PRO_0000366591" description="Ribosomal RNA large subunit methyltransferase H">
    <location>
        <begin position="1"/>
        <end position="140"/>
    </location>
</feature>
<feature type="binding site" evidence="1">
    <location>
        <position position="55"/>
    </location>
    <ligand>
        <name>S-adenosyl-L-methionine</name>
        <dbReference type="ChEBI" id="CHEBI:59789"/>
    </ligand>
</feature>
<feature type="binding site" evidence="1">
    <location>
        <position position="87"/>
    </location>
    <ligand>
        <name>S-adenosyl-L-methionine</name>
        <dbReference type="ChEBI" id="CHEBI:59789"/>
    </ligand>
</feature>
<comment type="function">
    <text evidence="1">Specifically methylates the pseudouridine at position 1915 (m3Psi1915) in 23S rRNA.</text>
</comment>
<comment type="catalytic activity">
    <reaction evidence="1">
        <text>pseudouridine(1915) in 23S rRNA + S-adenosyl-L-methionine = N(3)-methylpseudouridine(1915) in 23S rRNA + S-adenosyl-L-homocysteine + H(+)</text>
        <dbReference type="Rhea" id="RHEA:42752"/>
        <dbReference type="Rhea" id="RHEA-COMP:10221"/>
        <dbReference type="Rhea" id="RHEA-COMP:10222"/>
        <dbReference type="ChEBI" id="CHEBI:15378"/>
        <dbReference type="ChEBI" id="CHEBI:57856"/>
        <dbReference type="ChEBI" id="CHEBI:59789"/>
        <dbReference type="ChEBI" id="CHEBI:65314"/>
        <dbReference type="ChEBI" id="CHEBI:74486"/>
        <dbReference type="EC" id="2.1.1.177"/>
    </reaction>
</comment>
<comment type="subunit">
    <text evidence="1">Homodimer.</text>
</comment>
<comment type="subcellular location">
    <subcellularLocation>
        <location evidence="1">Cytoplasm</location>
    </subcellularLocation>
</comment>
<comment type="similarity">
    <text evidence="1">Belongs to the RNA methyltransferase RlmH family.</text>
</comment>
<keyword id="KW-0963">Cytoplasm</keyword>
<keyword id="KW-0489">Methyltransferase</keyword>
<keyword id="KW-1185">Reference proteome</keyword>
<keyword id="KW-0698">rRNA processing</keyword>
<keyword id="KW-0949">S-adenosyl-L-methionine</keyword>
<keyword id="KW-0808">Transferase</keyword>